<name>BIOF_TRIEI</name>
<protein>
    <recommendedName>
        <fullName>Putative 8-amino-7-oxononanoate synthase</fullName>
        <shortName>AONS</shortName>
        <ecNumber>2.3.1.47</ecNumber>
    </recommendedName>
    <alternativeName>
        <fullName>7-keto-8-amino-pelargonic acid synthase</fullName>
        <shortName>7-KAP synthase</shortName>
    </alternativeName>
    <alternativeName>
        <fullName>8-amino-7-ketopelargonate synthase</fullName>
    </alternativeName>
</protein>
<gene>
    <name type="primary">bioF</name>
    <name type="ordered locus">Tery_0352</name>
</gene>
<proteinExistence type="inferred from homology"/>
<sequence>MQNNPYSWIESSLSTIHKANWYRSVKTIESIPGAIIKLEGKKLINFASNDYLGLAGDERLIAAAIQATKEFGSGSTGSRLLTGHREIHQELEREIAKLKQTESALVFSSGYLANIGVISSVVSQRDLILSDEYNHSSLKNGAILSGAKIIEYSHNNIEYLKNKLEQKRENYRRSLIITDSVFSMDGDLCKLPLLLDLAEKYNSMLLVDEAHATGVFGINGGGCVEHFNCTGKQLIQIGTLSKALGSLGGYVAGSKNLIEFLRNRTPTWIYTTGLTPADTAAALTAIKIIKKEPERRMKLWQNLEIFINLLETESQLLHKGKKTSNYESPIICFPLKNAVEALKVGEKLKQEGIFAPAIRPPTVNTSRIRISLMSTHETSHLQQLIAALINLSQ</sequence>
<evidence type="ECO:0000250" key="1"/>
<evidence type="ECO:0000305" key="2"/>
<dbReference type="EC" id="2.3.1.47"/>
<dbReference type="EMBL" id="CP000393">
    <property type="protein sequence ID" value="ABG49822.1"/>
    <property type="molecule type" value="Genomic_DNA"/>
</dbReference>
<dbReference type="RefSeq" id="WP_011610218.1">
    <property type="nucleotide sequence ID" value="NC_008312.1"/>
</dbReference>
<dbReference type="SMR" id="Q119K2"/>
<dbReference type="STRING" id="203124.Tery_0352"/>
<dbReference type="KEGG" id="ter:Tery_0352"/>
<dbReference type="eggNOG" id="COG0156">
    <property type="taxonomic scope" value="Bacteria"/>
</dbReference>
<dbReference type="HOGENOM" id="CLU_015846_11_0_3"/>
<dbReference type="OrthoDB" id="9807157at2"/>
<dbReference type="UniPathway" id="UPA00078"/>
<dbReference type="GO" id="GO:0008710">
    <property type="term" value="F:8-amino-7-oxononanoate synthase activity"/>
    <property type="evidence" value="ECO:0007669"/>
    <property type="project" value="UniProtKB-EC"/>
</dbReference>
<dbReference type="GO" id="GO:0030170">
    <property type="term" value="F:pyridoxal phosphate binding"/>
    <property type="evidence" value="ECO:0007669"/>
    <property type="project" value="InterPro"/>
</dbReference>
<dbReference type="GO" id="GO:0009102">
    <property type="term" value="P:biotin biosynthetic process"/>
    <property type="evidence" value="ECO:0007669"/>
    <property type="project" value="UniProtKB-UniPathway"/>
</dbReference>
<dbReference type="CDD" id="cd06454">
    <property type="entry name" value="KBL_like"/>
    <property type="match status" value="1"/>
</dbReference>
<dbReference type="Gene3D" id="3.90.1150.10">
    <property type="entry name" value="Aspartate Aminotransferase, domain 1"/>
    <property type="match status" value="1"/>
</dbReference>
<dbReference type="Gene3D" id="3.40.640.10">
    <property type="entry name" value="Type I PLP-dependent aspartate aminotransferase-like (Major domain)"/>
    <property type="match status" value="1"/>
</dbReference>
<dbReference type="InterPro" id="IPR001917">
    <property type="entry name" value="Aminotrans_II_pyridoxalP_BS"/>
</dbReference>
<dbReference type="InterPro" id="IPR004839">
    <property type="entry name" value="Aminotransferase_I/II_large"/>
</dbReference>
<dbReference type="InterPro" id="IPR050087">
    <property type="entry name" value="AON_synthase_class-II"/>
</dbReference>
<dbReference type="InterPro" id="IPR004723">
    <property type="entry name" value="AONS_Archaea/Proteobacteria"/>
</dbReference>
<dbReference type="InterPro" id="IPR015424">
    <property type="entry name" value="PyrdxlP-dep_Trfase"/>
</dbReference>
<dbReference type="InterPro" id="IPR015421">
    <property type="entry name" value="PyrdxlP-dep_Trfase_major"/>
</dbReference>
<dbReference type="InterPro" id="IPR015422">
    <property type="entry name" value="PyrdxlP-dep_Trfase_small"/>
</dbReference>
<dbReference type="NCBIfam" id="TIGR00858">
    <property type="entry name" value="bioF"/>
    <property type="match status" value="1"/>
</dbReference>
<dbReference type="PANTHER" id="PTHR13693:SF100">
    <property type="entry name" value="8-AMINO-7-OXONONANOATE SYNTHASE"/>
    <property type="match status" value="1"/>
</dbReference>
<dbReference type="PANTHER" id="PTHR13693">
    <property type="entry name" value="CLASS II AMINOTRANSFERASE/8-AMINO-7-OXONONANOATE SYNTHASE"/>
    <property type="match status" value="1"/>
</dbReference>
<dbReference type="Pfam" id="PF00155">
    <property type="entry name" value="Aminotran_1_2"/>
    <property type="match status" value="1"/>
</dbReference>
<dbReference type="SUPFAM" id="SSF53383">
    <property type="entry name" value="PLP-dependent transferases"/>
    <property type="match status" value="1"/>
</dbReference>
<dbReference type="PROSITE" id="PS00599">
    <property type="entry name" value="AA_TRANSFER_CLASS_2"/>
    <property type="match status" value="1"/>
</dbReference>
<keyword id="KW-0093">Biotin biosynthesis</keyword>
<keyword id="KW-0663">Pyridoxal phosphate</keyword>
<keyword id="KW-0808">Transferase</keyword>
<organism>
    <name type="scientific">Trichodesmium erythraeum (strain IMS101)</name>
    <dbReference type="NCBI Taxonomy" id="203124"/>
    <lineage>
        <taxon>Bacteria</taxon>
        <taxon>Bacillati</taxon>
        <taxon>Cyanobacteriota</taxon>
        <taxon>Cyanophyceae</taxon>
        <taxon>Oscillatoriophycideae</taxon>
        <taxon>Oscillatoriales</taxon>
        <taxon>Microcoleaceae</taxon>
        <taxon>Trichodesmium</taxon>
    </lineage>
</organism>
<accession>Q119K2</accession>
<comment type="function">
    <text evidence="1">Catalyzes the decarboxylative condensation of pimeloyl-[acyl-carrier protein] and L-alanine to produce 8-amino-7-oxononanoate (AON), [acyl-carrier protein], and carbon dioxide.</text>
</comment>
<comment type="catalytic activity">
    <reaction>
        <text>6-carboxyhexanoyl-[ACP] + L-alanine + H(+) = (8S)-8-amino-7-oxononanoate + holo-[ACP] + CO2</text>
        <dbReference type="Rhea" id="RHEA:42288"/>
        <dbReference type="Rhea" id="RHEA-COMP:9685"/>
        <dbReference type="Rhea" id="RHEA-COMP:9955"/>
        <dbReference type="ChEBI" id="CHEBI:15378"/>
        <dbReference type="ChEBI" id="CHEBI:16526"/>
        <dbReference type="ChEBI" id="CHEBI:57972"/>
        <dbReference type="ChEBI" id="CHEBI:64479"/>
        <dbReference type="ChEBI" id="CHEBI:78846"/>
        <dbReference type="ChEBI" id="CHEBI:149468"/>
        <dbReference type="EC" id="2.3.1.47"/>
    </reaction>
</comment>
<comment type="cofactor">
    <cofactor evidence="1">
        <name>pyridoxal 5'-phosphate</name>
        <dbReference type="ChEBI" id="CHEBI:597326"/>
    </cofactor>
</comment>
<comment type="pathway">
    <text>Cofactor biosynthesis; biotin biosynthesis.</text>
</comment>
<comment type="subunit">
    <text evidence="1">Homodimer.</text>
</comment>
<comment type="similarity">
    <text evidence="2">Belongs to the class-II pyridoxal-phosphate-dependent aminotransferase family. BioF subfamily.</text>
</comment>
<feature type="chain" id="PRO_0000381131" description="Putative 8-amino-7-oxononanoate synthase">
    <location>
        <begin position="1"/>
        <end position="393"/>
    </location>
</feature>
<feature type="binding site" evidence="1">
    <location>
        <position position="23"/>
    </location>
    <ligand>
        <name>substrate</name>
    </ligand>
</feature>
<feature type="binding site" evidence="1">
    <location>
        <begin position="110"/>
        <end position="111"/>
    </location>
    <ligand>
        <name>pyridoxal 5'-phosphate</name>
        <dbReference type="ChEBI" id="CHEBI:597326"/>
    </ligand>
</feature>
<feature type="binding site" evidence="1">
    <location>
        <position position="135"/>
    </location>
    <ligand>
        <name>substrate</name>
    </ligand>
</feature>
<feature type="binding site" evidence="1">
    <location>
        <position position="183"/>
    </location>
    <ligand>
        <name>pyridoxal 5'-phosphate</name>
        <dbReference type="ChEBI" id="CHEBI:597326"/>
    </ligand>
</feature>
<feature type="binding site" evidence="1">
    <location>
        <begin position="208"/>
        <end position="211"/>
    </location>
    <ligand>
        <name>pyridoxal 5'-phosphate</name>
        <dbReference type="ChEBI" id="CHEBI:597326"/>
    </ligand>
</feature>
<feature type="binding site" evidence="1">
    <location>
        <begin position="239"/>
        <end position="242"/>
    </location>
    <ligand>
        <name>pyridoxal 5'-phosphate</name>
        <dbReference type="ChEBI" id="CHEBI:597326"/>
    </ligand>
</feature>
<feature type="binding site" evidence="1">
    <location>
        <position position="362"/>
    </location>
    <ligand>
        <name>substrate</name>
    </ligand>
</feature>
<feature type="modified residue" description="N6-(pyridoxal phosphate)lysine" evidence="1">
    <location>
        <position position="242"/>
    </location>
</feature>
<reference key="1">
    <citation type="journal article" date="2015" name="Proc. Natl. Acad. Sci. U.S.A.">
        <title>Trichodesmium genome maintains abundant, widespread noncoding DNA in situ, despite oligotrophic lifestyle.</title>
        <authorList>
            <person name="Walworth N."/>
            <person name="Pfreundt U."/>
            <person name="Nelson W.C."/>
            <person name="Mincer T."/>
            <person name="Heidelberg J.F."/>
            <person name="Fu F."/>
            <person name="Waterbury J.B."/>
            <person name="Glavina del Rio T."/>
            <person name="Goodwin L."/>
            <person name="Kyrpides N.C."/>
            <person name="Land M.L."/>
            <person name="Woyke T."/>
            <person name="Hutchins D.A."/>
            <person name="Hess W.R."/>
            <person name="Webb E.A."/>
        </authorList>
    </citation>
    <scope>NUCLEOTIDE SEQUENCE [LARGE SCALE GENOMIC DNA]</scope>
    <source>
        <strain>IMS101</strain>
    </source>
</reference>